<organism>
    <name type="scientific">Shewanella sp. (strain ANA-3)</name>
    <dbReference type="NCBI Taxonomy" id="94122"/>
    <lineage>
        <taxon>Bacteria</taxon>
        <taxon>Pseudomonadati</taxon>
        <taxon>Pseudomonadota</taxon>
        <taxon>Gammaproteobacteria</taxon>
        <taxon>Alteromonadales</taxon>
        <taxon>Shewanellaceae</taxon>
        <taxon>Shewanella</taxon>
    </lineage>
</organism>
<feature type="chain" id="PRO_1000050060" description="Probable protein kinase UbiB">
    <location>
        <begin position="1"/>
        <end position="549"/>
    </location>
</feature>
<feature type="transmembrane region" description="Helical" evidence="1">
    <location>
        <begin position="498"/>
        <end position="518"/>
    </location>
</feature>
<feature type="transmembrane region" description="Helical" evidence="1">
    <location>
        <begin position="520"/>
        <end position="540"/>
    </location>
</feature>
<feature type="domain" description="Protein kinase" evidence="1">
    <location>
        <begin position="123"/>
        <end position="501"/>
    </location>
</feature>
<feature type="active site" description="Proton acceptor" evidence="1">
    <location>
        <position position="287"/>
    </location>
</feature>
<feature type="binding site" evidence="1">
    <location>
        <begin position="129"/>
        <end position="137"/>
    </location>
    <ligand>
        <name>ATP</name>
        <dbReference type="ChEBI" id="CHEBI:30616"/>
    </ligand>
</feature>
<feature type="binding site" evidence="1">
    <location>
        <position position="152"/>
    </location>
    <ligand>
        <name>ATP</name>
        <dbReference type="ChEBI" id="CHEBI:30616"/>
    </ligand>
</feature>
<proteinExistence type="inferred from homology"/>
<dbReference type="EC" id="2.7.-.-" evidence="1"/>
<dbReference type="EMBL" id="CP000469">
    <property type="protein sequence ID" value="ABK49945.1"/>
    <property type="molecule type" value="Genomic_DNA"/>
</dbReference>
<dbReference type="RefSeq" id="WP_011718484.1">
    <property type="nucleotide sequence ID" value="NC_008577.1"/>
</dbReference>
<dbReference type="SMR" id="A0L1M6"/>
<dbReference type="STRING" id="94122.Shewana3_3727"/>
<dbReference type="KEGG" id="shn:Shewana3_3727"/>
<dbReference type="eggNOG" id="COG0661">
    <property type="taxonomic scope" value="Bacteria"/>
</dbReference>
<dbReference type="HOGENOM" id="CLU_006533_0_0_6"/>
<dbReference type="OrthoDB" id="9795390at2"/>
<dbReference type="UniPathway" id="UPA00232"/>
<dbReference type="Proteomes" id="UP000002589">
    <property type="component" value="Chromosome"/>
</dbReference>
<dbReference type="GO" id="GO:0005886">
    <property type="term" value="C:plasma membrane"/>
    <property type="evidence" value="ECO:0007669"/>
    <property type="project" value="UniProtKB-SubCell"/>
</dbReference>
<dbReference type="GO" id="GO:0005524">
    <property type="term" value="F:ATP binding"/>
    <property type="evidence" value="ECO:0007669"/>
    <property type="project" value="UniProtKB-KW"/>
</dbReference>
<dbReference type="GO" id="GO:0004672">
    <property type="term" value="F:protein kinase activity"/>
    <property type="evidence" value="ECO:0007669"/>
    <property type="project" value="UniProtKB-UniRule"/>
</dbReference>
<dbReference type="GO" id="GO:0010795">
    <property type="term" value="P:regulation of ubiquinone biosynthetic process"/>
    <property type="evidence" value="ECO:0007669"/>
    <property type="project" value="UniProtKB-UniRule"/>
</dbReference>
<dbReference type="GO" id="GO:0006744">
    <property type="term" value="P:ubiquinone biosynthetic process"/>
    <property type="evidence" value="ECO:0007669"/>
    <property type="project" value="UniProtKB-UniPathway"/>
</dbReference>
<dbReference type="CDD" id="cd13972">
    <property type="entry name" value="UbiB"/>
    <property type="match status" value="1"/>
</dbReference>
<dbReference type="HAMAP" id="MF_00414">
    <property type="entry name" value="UbiB"/>
    <property type="match status" value="1"/>
</dbReference>
<dbReference type="InterPro" id="IPR004147">
    <property type="entry name" value="ABC1_dom"/>
</dbReference>
<dbReference type="InterPro" id="IPR011009">
    <property type="entry name" value="Kinase-like_dom_sf"/>
</dbReference>
<dbReference type="InterPro" id="IPR010232">
    <property type="entry name" value="UbiB"/>
</dbReference>
<dbReference type="InterPro" id="IPR045308">
    <property type="entry name" value="UbiB_bact"/>
</dbReference>
<dbReference type="InterPro" id="IPR050154">
    <property type="entry name" value="UbiB_kinase"/>
</dbReference>
<dbReference type="NCBIfam" id="NF003404">
    <property type="entry name" value="PRK04750.1"/>
    <property type="match status" value="1"/>
</dbReference>
<dbReference type="NCBIfam" id="TIGR01982">
    <property type="entry name" value="UbiB"/>
    <property type="match status" value="1"/>
</dbReference>
<dbReference type="PANTHER" id="PTHR10566">
    <property type="entry name" value="CHAPERONE-ACTIVITY OF BC1 COMPLEX CABC1 -RELATED"/>
    <property type="match status" value="1"/>
</dbReference>
<dbReference type="PANTHER" id="PTHR10566:SF113">
    <property type="entry name" value="PROTEIN ACTIVITY OF BC1 COMPLEX KINASE 7, CHLOROPLASTIC"/>
    <property type="match status" value="1"/>
</dbReference>
<dbReference type="Pfam" id="PF03109">
    <property type="entry name" value="ABC1"/>
    <property type="match status" value="1"/>
</dbReference>
<dbReference type="SUPFAM" id="SSF56112">
    <property type="entry name" value="Protein kinase-like (PK-like)"/>
    <property type="match status" value="1"/>
</dbReference>
<reference key="1">
    <citation type="submission" date="2006-09" db="EMBL/GenBank/DDBJ databases">
        <title>Complete sequence of chromosome 1 of Shewanella sp. ANA-3.</title>
        <authorList>
            <person name="Copeland A."/>
            <person name="Lucas S."/>
            <person name="Lapidus A."/>
            <person name="Barry K."/>
            <person name="Detter J.C."/>
            <person name="Glavina del Rio T."/>
            <person name="Hammon N."/>
            <person name="Israni S."/>
            <person name="Dalin E."/>
            <person name="Tice H."/>
            <person name="Pitluck S."/>
            <person name="Chertkov O."/>
            <person name="Brettin T."/>
            <person name="Bruce D."/>
            <person name="Han C."/>
            <person name="Tapia R."/>
            <person name="Gilna P."/>
            <person name="Schmutz J."/>
            <person name="Larimer F."/>
            <person name="Land M."/>
            <person name="Hauser L."/>
            <person name="Kyrpides N."/>
            <person name="Kim E."/>
            <person name="Newman D."/>
            <person name="Salticov C."/>
            <person name="Konstantinidis K."/>
            <person name="Klappenback J."/>
            <person name="Tiedje J."/>
            <person name="Richardson P."/>
        </authorList>
    </citation>
    <scope>NUCLEOTIDE SEQUENCE [LARGE SCALE GENOMIC DNA]</scope>
    <source>
        <strain>ANA-3</strain>
    </source>
</reference>
<sequence length="549" mass="63330">MTLASIRRGYHVIKTLLQYGLDDVLPPKMTPWYFKLARNSLFWIRNKHKGKSGGERLKLAMQELGPVYIKLGQMLSTRRDLLSDEWANELAMLQDKVPPFDGALARQAIEAELKAPIESYFDDFDETPLASASISQVHTATLKSNGKAVVLKVLRPNVETKIQADLLLMSQTAKVIDYLLGEGNRLRPSEVIEDYRVTILGELNLKLEALNAIKLRNNFLDSDALYIPYVYEEFCYPRLMVMERIYGIPVSDIAALKAQGTNFKLLAERGVELFFTQVFRDNFFHADMHPGNIFISREHPENPYYIGLDCGIMGTLSEVDKRYLAENFLAFFNRDYHRIAQLYIESGWVSEKTDLQAFEQAIKVVCEPMFNKPLDEISFGHVLLELFRTARHFDIVVQPQLVLLEKTLLYIEGLGRQLYPQLDLWQTAKPFLEQWMAEQVGPKAMFKKVSTKLPYWSDKLPEFPELIYDNLKLGRKLLSSQQQMLDKYLKYQQQAHKSNYLLITSAILLICGTLLFNQDATLWSPYVCLISGAVLWIIGWRSRPKNRKF</sequence>
<evidence type="ECO:0000255" key="1">
    <source>
        <dbReference type="HAMAP-Rule" id="MF_00414"/>
    </source>
</evidence>
<name>UBIB_SHESA</name>
<protein>
    <recommendedName>
        <fullName evidence="1">Probable protein kinase UbiB</fullName>
        <ecNumber evidence="1">2.7.-.-</ecNumber>
    </recommendedName>
    <alternativeName>
        <fullName evidence="1">Ubiquinone biosynthesis protein UbiB</fullName>
    </alternativeName>
</protein>
<accession>A0L1M6</accession>
<comment type="function">
    <text evidence="1">Is probably a protein kinase regulator of UbiI activity which is involved in aerobic coenzyme Q (ubiquinone) biosynthesis.</text>
</comment>
<comment type="pathway">
    <text>Cofactor biosynthesis; ubiquinone biosynthesis [regulation].</text>
</comment>
<comment type="subcellular location">
    <subcellularLocation>
        <location evidence="1">Cell inner membrane</location>
        <topology evidence="1">Multi-pass membrane protein</topology>
    </subcellularLocation>
</comment>
<comment type="similarity">
    <text evidence="1">Belongs to the ABC1 family. UbiB subfamily.</text>
</comment>
<gene>
    <name evidence="1" type="primary">ubiB</name>
    <name type="ordered locus">Shewana3_3727</name>
</gene>
<keyword id="KW-0067">ATP-binding</keyword>
<keyword id="KW-0997">Cell inner membrane</keyword>
<keyword id="KW-1003">Cell membrane</keyword>
<keyword id="KW-0418">Kinase</keyword>
<keyword id="KW-0472">Membrane</keyword>
<keyword id="KW-0547">Nucleotide-binding</keyword>
<keyword id="KW-0808">Transferase</keyword>
<keyword id="KW-0812">Transmembrane</keyword>
<keyword id="KW-1133">Transmembrane helix</keyword>
<keyword id="KW-0831">Ubiquinone biosynthesis</keyword>